<dbReference type="EC" id="3.5.1.5" evidence="1"/>
<dbReference type="EMBL" id="CP000124">
    <property type="protein sequence ID" value="ABA49103.1"/>
    <property type="molecule type" value="Genomic_DNA"/>
</dbReference>
<dbReference type="SMR" id="Q3JPJ6"/>
<dbReference type="MEROPS" id="M38.982"/>
<dbReference type="EnsemblBacteria" id="ABA49103">
    <property type="protein sequence ID" value="ABA49103"/>
    <property type="gene ID" value="BURPS1710b_3135"/>
</dbReference>
<dbReference type="KEGG" id="bpm:BURPS1710b_3135"/>
<dbReference type="HOGENOM" id="CLU_000980_0_0_4"/>
<dbReference type="UniPathway" id="UPA00258">
    <property type="reaction ID" value="UER00370"/>
</dbReference>
<dbReference type="Proteomes" id="UP000002700">
    <property type="component" value="Chromosome I"/>
</dbReference>
<dbReference type="GO" id="GO:0005737">
    <property type="term" value="C:cytoplasm"/>
    <property type="evidence" value="ECO:0007669"/>
    <property type="project" value="UniProtKB-SubCell"/>
</dbReference>
<dbReference type="GO" id="GO:0016151">
    <property type="term" value="F:nickel cation binding"/>
    <property type="evidence" value="ECO:0007669"/>
    <property type="project" value="UniProtKB-UniRule"/>
</dbReference>
<dbReference type="GO" id="GO:0009039">
    <property type="term" value="F:urease activity"/>
    <property type="evidence" value="ECO:0007669"/>
    <property type="project" value="UniProtKB-UniRule"/>
</dbReference>
<dbReference type="GO" id="GO:0043419">
    <property type="term" value="P:urea catabolic process"/>
    <property type="evidence" value="ECO:0007669"/>
    <property type="project" value="UniProtKB-UniRule"/>
</dbReference>
<dbReference type="CDD" id="cd00375">
    <property type="entry name" value="Urease_alpha"/>
    <property type="match status" value="1"/>
</dbReference>
<dbReference type="Gene3D" id="3.20.20.140">
    <property type="entry name" value="Metal-dependent hydrolases"/>
    <property type="match status" value="1"/>
</dbReference>
<dbReference type="Gene3D" id="2.30.40.10">
    <property type="entry name" value="Urease, subunit C, domain 1"/>
    <property type="match status" value="1"/>
</dbReference>
<dbReference type="HAMAP" id="MF_01953">
    <property type="entry name" value="Urease_alpha"/>
    <property type="match status" value="1"/>
</dbReference>
<dbReference type="InterPro" id="IPR006680">
    <property type="entry name" value="Amidohydro-rel"/>
</dbReference>
<dbReference type="InterPro" id="IPR011059">
    <property type="entry name" value="Metal-dep_hydrolase_composite"/>
</dbReference>
<dbReference type="InterPro" id="IPR032466">
    <property type="entry name" value="Metal_Hydrolase"/>
</dbReference>
<dbReference type="InterPro" id="IPR011612">
    <property type="entry name" value="Urease_alpha_N_dom"/>
</dbReference>
<dbReference type="InterPro" id="IPR050112">
    <property type="entry name" value="Urease_alpha_subunit"/>
</dbReference>
<dbReference type="InterPro" id="IPR017950">
    <property type="entry name" value="Urease_AS"/>
</dbReference>
<dbReference type="InterPro" id="IPR005848">
    <property type="entry name" value="Urease_asu"/>
</dbReference>
<dbReference type="InterPro" id="IPR017951">
    <property type="entry name" value="Urease_asu_c"/>
</dbReference>
<dbReference type="InterPro" id="IPR029754">
    <property type="entry name" value="Urease_Ni-bd"/>
</dbReference>
<dbReference type="NCBIfam" id="NF009685">
    <property type="entry name" value="PRK13206.1"/>
    <property type="match status" value="1"/>
</dbReference>
<dbReference type="NCBIfam" id="NF009686">
    <property type="entry name" value="PRK13207.1"/>
    <property type="match status" value="1"/>
</dbReference>
<dbReference type="NCBIfam" id="TIGR01792">
    <property type="entry name" value="urease_alph"/>
    <property type="match status" value="1"/>
</dbReference>
<dbReference type="PANTHER" id="PTHR43440">
    <property type="entry name" value="UREASE"/>
    <property type="match status" value="1"/>
</dbReference>
<dbReference type="PANTHER" id="PTHR43440:SF1">
    <property type="entry name" value="UREASE"/>
    <property type="match status" value="1"/>
</dbReference>
<dbReference type="Pfam" id="PF01979">
    <property type="entry name" value="Amidohydro_1"/>
    <property type="match status" value="1"/>
</dbReference>
<dbReference type="Pfam" id="PF00449">
    <property type="entry name" value="Urease_alpha"/>
    <property type="match status" value="1"/>
</dbReference>
<dbReference type="PRINTS" id="PR01752">
    <property type="entry name" value="UREASE"/>
</dbReference>
<dbReference type="SUPFAM" id="SSF51338">
    <property type="entry name" value="Composite domain of metallo-dependent hydrolases"/>
    <property type="match status" value="2"/>
</dbReference>
<dbReference type="SUPFAM" id="SSF51556">
    <property type="entry name" value="Metallo-dependent hydrolases"/>
    <property type="match status" value="1"/>
</dbReference>
<dbReference type="PROSITE" id="PS01120">
    <property type="entry name" value="UREASE_1"/>
    <property type="match status" value="1"/>
</dbReference>
<dbReference type="PROSITE" id="PS00145">
    <property type="entry name" value="UREASE_2"/>
    <property type="match status" value="1"/>
</dbReference>
<dbReference type="PROSITE" id="PS51368">
    <property type="entry name" value="UREASE_3"/>
    <property type="match status" value="1"/>
</dbReference>
<feature type="chain" id="PRO_0000234149" description="Urease subunit alpha">
    <location>
        <begin position="1"/>
        <end position="564"/>
    </location>
</feature>
<feature type="domain" description="Urease" evidence="1">
    <location>
        <begin position="126"/>
        <end position="564"/>
    </location>
</feature>
<feature type="active site" description="Proton donor" evidence="1">
    <location>
        <position position="317"/>
    </location>
</feature>
<feature type="binding site" evidence="1">
    <location>
        <position position="131"/>
    </location>
    <ligand>
        <name>Ni(2+)</name>
        <dbReference type="ChEBI" id="CHEBI:49786"/>
        <label>1</label>
    </ligand>
</feature>
<feature type="binding site" evidence="1">
    <location>
        <position position="133"/>
    </location>
    <ligand>
        <name>Ni(2+)</name>
        <dbReference type="ChEBI" id="CHEBI:49786"/>
        <label>1</label>
    </ligand>
</feature>
<feature type="binding site" description="via carbamate group" evidence="1">
    <location>
        <position position="214"/>
    </location>
    <ligand>
        <name>Ni(2+)</name>
        <dbReference type="ChEBI" id="CHEBI:49786"/>
        <label>1</label>
    </ligand>
</feature>
<feature type="binding site" description="via carbamate group" evidence="1">
    <location>
        <position position="214"/>
    </location>
    <ligand>
        <name>Ni(2+)</name>
        <dbReference type="ChEBI" id="CHEBI:49786"/>
        <label>2</label>
    </ligand>
</feature>
<feature type="binding site" evidence="1">
    <location>
        <position position="216"/>
    </location>
    <ligand>
        <name>substrate</name>
    </ligand>
</feature>
<feature type="binding site" evidence="1">
    <location>
        <position position="243"/>
    </location>
    <ligand>
        <name>Ni(2+)</name>
        <dbReference type="ChEBI" id="CHEBI:49786"/>
        <label>2</label>
    </ligand>
</feature>
<feature type="binding site" evidence="1">
    <location>
        <position position="269"/>
    </location>
    <ligand>
        <name>Ni(2+)</name>
        <dbReference type="ChEBI" id="CHEBI:49786"/>
        <label>2</label>
    </ligand>
</feature>
<feature type="binding site" evidence="1">
    <location>
        <position position="357"/>
    </location>
    <ligand>
        <name>Ni(2+)</name>
        <dbReference type="ChEBI" id="CHEBI:49786"/>
        <label>1</label>
    </ligand>
</feature>
<feature type="modified residue" description="N6-carboxylysine" evidence="1">
    <location>
        <position position="214"/>
    </location>
</feature>
<proteinExistence type="inferred from homology"/>
<accession>Q3JPJ6</accession>
<reference key="1">
    <citation type="journal article" date="2010" name="Genome Biol. Evol.">
        <title>Continuing evolution of Burkholderia mallei through genome reduction and large-scale rearrangements.</title>
        <authorList>
            <person name="Losada L."/>
            <person name="Ronning C.M."/>
            <person name="DeShazer D."/>
            <person name="Woods D."/>
            <person name="Fedorova N."/>
            <person name="Kim H.S."/>
            <person name="Shabalina S.A."/>
            <person name="Pearson T.R."/>
            <person name="Brinkac L."/>
            <person name="Tan P."/>
            <person name="Nandi T."/>
            <person name="Crabtree J."/>
            <person name="Badger J."/>
            <person name="Beckstrom-Sternberg S."/>
            <person name="Saqib M."/>
            <person name="Schutzer S.E."/>
            <person name="Keim P."/>
            <person name="Nierman W.C."/>
        </authorList>
    </citation>
    <scope>NUCLEOTIDE SEQUENCE [LARGE SCALE GENOMIC DNA]</scope>
    <source>
        <strain>1710b</strain>
    </source>
</reference>
<gene>
    <name evidence="1" type="primary">ureC</name>
    <name type="ordered locus">BURPS1710b_3135</name>
</gene>
<name>URE1_BURP1</name>
<sequence length="564" mass="60209">MSRRAYAEMYGPTTGDRIRLADTELLIEVERDHTLYGEEVKFGGGKVIRDGMGQSQLPAADVADTVITNAVILDHWGIVKADIAIKHGRIAAIGKAGNPDIQPGVTIAIGAATEIIAGEGLIVTAGGIDTHIHFISPQQIDEALASGVTTMIGGGTGPATGTNATTCTPGPWHMERMLQAADGWPINLGFLGKGNASRPQPLVEQIEAGAIGLKLHEDWGTTPAAIDNCLTVADDTDTQVAIHTDTLNEAGFVEATVAAFKGRTIHTYHTEGAGGGHAPDILKVCGEANVLPSSTNPTRPYTINTLDEHLDMLMVCHHLDPSIAEDLAFAESRIRRETIAAEDILHDLGALSMLSSDSQAMGRVGEVIIRTWQTAHKMKVQRGALTGDGARNDNFRAKRYVAKYTINPALTHGIAHEVGSIEPGKWADLVLWEPAFFGVKPAMIVKGGMIAVAQMGDPNASIPTPQPVHYREMFATRGGALARTSLTFVSQLALDAGIGARYGLAKRLVPVRGCRTVTKRDMIHNAWQPAIRVDPETYDVVADGALLTCEPAAVLPMAQRYFLF</sequence>
<comment type="catalytic activity">
    <reaction evidence="1">
        <text>urea + 2 H2O + H(+) = hydrogencarbonate + 2 NH4(+)</text>
        <dbReference type="Rhea" id="RHEA:20557"/>
        <dbReference type="ChEBI" id="CHEBI:15377"/>
        <dbReference type="ChEBI" id="CHEBI:15378"/>
        <dbReference type="ChEBI" id="CHEBI:16199"/>
        <dbReference type="ChEBI" id="CHEBI:17544"/>
        <dbReference type="ChEBI" id="CHEBI:28938"/>
        <dbReference type="EC" id="3.5.1.5"/>
    </reaction>
</comment>
<comment type="cofactor">
    <cofactor evidence="1">
        <name>Ni cation</name>
        <dbReference type="ChEBI" id="CHEBI:25516"/>
    </cofactor>
    <text evidence="1">Binds 2 nickel ions per subunit.</text>
</comment>
<comment type="pathway">
    <text evidence="1">Nitrogen metabolism; urea degradation; CO(2) and NH(3) from urea (urease route): step 1/1.</text>
</comment>
<comment type="subunit">
    <text evidence="1">Heterotrimer of UreA (gamma), UreB (beta) and UreC (alpha) subunits. Three heterotrimers associate to form the active enzyme.</text>
</comment>
<comment type="subcellular location">
    <subcellularLocation>
        <location evidence="1">Cytoplasm</location>
    </subcellularLocation>
</comment>
<comment type="PTM">
    <text evidence="1">Carboxylation allows a single lysine to coordinate two nickel ions.</text>
</comment>
<comment type="similarity">
    <text evidence="1">Belongs to the metallo-dependent hydrolases superfamily. Urease alpha subunit family.</text>
</comment>
<evidence type="ECO:0000255" key="1">
    <source>
        <dbReference type="HAMAP-Rule" id="MF_01953"/>
    </source>
</evidence>
<keyword id="KW-0963">Cytoplasm</keyword>
<keyword id="KW-0378">Hydrolase</keyword>
<keyword id="KW-0479">Metal-binding</keyword>
<keyword id="KW-0533">Nickel</keyword>
<protein>
    <recommendedName>
        <fullName evidence="1">Urease subunit alpha</fullName>
        <ecNumber evidence="1">3.5.1.5</ecNumber>
    </recommendedName>
    <alternativeName>
        <fullName evidence="1">Urea amidohydrolase subunit alpha</fullName>
    </alternativeName>
</protein>
<organism>
    <name type="scientific">Burkholderia pseudomallei (strain 1710b)</name>
    <dbReference type="NCBI Taxonomy" id="320372"/>
    <lineage>
        <taxon>Bacteria</taxon>
        <taxon>Pseudomonadati</taxon>
        <taxon>Pseudomonadota</taxon>
        <taxon>Betaproteobacteria</taxon>
        <taxon>Burkholderiales</taxon>
        <taxon>Burkholderiaceae</taxon>
        <taxon>Burkholderia</taxon>
        <taxon>pseudomallei group</taxon>
    </lineage>
</organism>